<comment type="function">
    <text evidence="2">Probable nitrate/nitrite antiporter that may be involved in nitrate import and nitrite export during anaerobic growth.</text>
</comment>
<comment type="catalytic activity">
    <reaction evidence="5">
        <text>nitrate(in) + nitrite(out) = nitrate(out) + nitrite(in)</text>
        <dbReference type="Rhea" id="RHEA:28743"/>
        <dbReference type="ChEBI" id="CHEBI:16301"/>
        <dbReference type="ChEBI" id="CHEBI:17632"/>
    </reaction>
    <physiologicalReaction direction="right-to-left" evidence="5">
        <dbReference type="Rhea" id="RHEA:28745"/>
    </physiologicalReaction>
</comment>
<comment type="subcellular location">
    <subcellularLocation>
        <location evidence="4">Cell membrane</location>
        <topology evidence="1">Multi-pass membrane protein</topology>
    </subcellularLocation>
</comment>
<comment type="disruption phenotype">
    <text evidence="2">Mutation has minor effects on the ability to grow anaerobically. In contrast, narK1/narK2 double mutant is unable to grow anaerobically.</text>
</comment>
<comment type="similarity">
    <text evidence="4">Belongs to the major facilitator superfamily. Nitrate/nitrite porter (TC 2.A.1.8) family.</text>
</comment>
<feature type="chain" id="PRO_0000439859" description="Probable nitrate/nitrite antiporter NarK1">
    <location>
        <begin position="1"/>
        <end position="443"/>
    </location>
</feature>
<feature type="transmembrane region" description="Helical" evidence="1">
    <location>
        <begin position="23"/>
        <end position="43"/>
    </location>
</feature>
<feature type="transmembrane region" description="Helical" evidence="1">
    <location>
        <begin position="56"/>
        <end position="76"/>
    </location>
</feature>
<feature type="transmembrane region" description="Helical" evidence="1">
    <location>
        <begin position="79"/>
        <end position="99"/>
    </location>
</feature>
<feature type="transmembrane region" description="Helical" evidence="1">
    <location>
        <begin position="108"/>
        <end position="128"/>
    </location>
</feature>
<feature type="transmembrane region" description="Helical" evidence="1">
    <location>
        <begin position="142"/>
        <end position="164"/>
    </location>
</feature>
<feature type="transmembrane region" description="Helical" evidence="1">
    <location>
        <begin position="182"/>
        <end position="202"/>
    </location>
</feature>
<feature type="transmembrane region" description="Helical" evidence="1">
    <location>
        <begin position="230"/>
        <end position="250"/>
    </location>
</feature>
<feature type="transmembrane region" description="Helical" evidence="1">
    <location>
        <begin position="255"/>
        <end position="275"/>
    </location>
</feature>
<feature type="transmembrane region" description="Helical" evidence="1">
    <location>
        <begin position="298"/>
        <end position="318"/>
    </location>
</feature>
<feature type="transmembrane region" description="Helical" evidence="1">
    <location>
        <begin position="329"/>
        <end position="349"/>
    </location>
</feature>
<feature type="transmembrane region" description="Helical" evidence="1">
    <location>
        <begin position="368"/>
        <end position="388"/>
    </location>
</feature>
<feature type="transmembrane region" description="Helical" evidence="1">
    <location>
        <begin position="401"/>
        <end position="421"/>
    </location>
</feature>
<dbReference type="EMBL" id="Y10124">
    <property type="protein sequence ID" value="CAB65479.2"/>
    <property type="molecule type" value="Genomic_DNA"/>
</dbReference>
<dbReference type="RefSeq" id="WP_124105652.1">
    <property type="nucleotide sequence ID" value="NZ_AP025610.1"/>
</dbReference>
<dbReference type="SMR" id="Q9RA46"/>
<dbReference type="TCDB" id="2.A.1.8.8">
    <property type="family name" value="the major facilitator superfamily (mfs)"/>
</dbReference>
<dbReference type="GO" id="GO:0005886">
    <property type="term" value="C:plasma membrane"/>
    <property type="evidence" value="ECO:0007669"/>
    <property type="project" value="UniProtKB-SubCell"/>
</dbReference>
<dbReference type="GO" id="GO:0015297">
    <property type="term" value="F:antiporter activity"/>
    <property type="evidence" value="ECO:0007669"/>
    <property type="project" value="UniProtKB-KW"/>
</dbReference>
<dbReference type="GO" id="GO:0015112">
    <property type="term" value="F:nitrate transmembrane transporter activity"/>
    <property type="evidence" value="ECO:0007669"/>
    <property type="project" value="InterPro"/>
</dbReference>
<dbReference type="GO" id="GO:0042128">
    <property type="term" value="P:nitrate assimilation"/>
    <property type="evidence" value="ECO:0007669"/>
    <property type="project" value="UniProtKB-KW"/>
</dbReference>
<dbReference type="CDD" id="cd17341">
    <property type="entry name" value="MFS_NRT2_like"/>
    <property type="match status" value="1"/>
</dbReference>
<dbReference type="Gene3D" id="1.20.1250.20">
    <property type="entry name" value="MFS general substrate transporter like domains"/>
    <property type="match status" value="2"/>
</dbReference>
<dbReference type="InterPro" id="IPR011701">
    <property type="entry name" value="MFS"/>
</dbReference>
<dbReference type="InterPro" id="IPR020846">
    <property type="entry name" value="MFS_dom"/>
</dbReference>
<dbReference type="InterPro" id="IPR036259">
    <property type="entry name" value="MFS_trans_sf"/>
</dbReference>
<dbReference type="InterPro" id="IPR044772">
    <property type="entry name" value="NO3_transporter"/>
</dbReference>
<dbReference type="PANTHER" id="PTHR23515">
    <property type="entry name" value="HIGH-AFFINITY NITRATE TRANSPORTER 2.3"/>
    <property type="match status" value="1"/>
</dbReference>
<dbReference type="Pfam" id="PF07690">
    <property type="entry name" value="MFS_1"/>
    <property type="match status" value="1"/>
</dbReference>
<dbReference type="SUPFAM" id="SSF103473">
    <property type="entry name" value="MFS general substrate transporter"/>
    <property type="match status" value="1"/>
</dbReference>
<dbReference type="PROSITE" id="PS50850">
    <property type="entry name" value="MFS"/>
    <property type="match status" value="1"/>
</dbReference>
<keyword id="KW-0050">Antiport</keyword>
<keyword id="KW-1003">Cell membrane</keyword>
<keyword id="KW-0472">Membrane</keyword>
<keyword id="KW-0534">Nitrate assimilation</keyword>
<keyword id="KW-0812">Transmembrane</keyword>
<keyword id="KW-1133">Transmembrane helix</keyword>
<keyword id="KW-0813">Transport</keyword>
<gene>
    <name evidence="3" type="primary">narK1</name>
    <name evidence="6" type="synonym">narK</name>
</gene>
<sequence>MIHDPAQLEKERPDRLRVLWLSTLAFTLMFAAWLMFGVLGVPIRKEFGLSDVQLSWISALAILNGSLWRLLAGILADRYGGRLVFTLMLFFTAIPAYLVSRAGSYEELLLYAFLVGFAGNSFSVGIAWNSAWFPKDQQGFALGVFGAGNVGASVTKFIGPALIASVPASGYLGGLIPGGWRFIPFLYAVLLVLMGFVLWFGTPRKDKRPGQGRPFLDMLKPLRYVRVWRFSLYYVVVFGAYVALSAWLPKYYVDVFGLPLHEAALLTALFIFPASLLRPVGGYLSDRFGARRIMYWTFGIILLASGVLMMPEGHIVLYTKQGAKEVMQFTMGVELFTLLVFLIGVGMGIGKAAVYKHIPTYFPQDVGAVGGLVGMLGALGGFFLPPLFAYAQAWTGLPQMTFFVLFLLAAISFLWMHLTVLKLLQQEAQHLKNDFELKGDRPC</sequence>
<proteinExistence type="inferred from homology"/>
<reference key="1">
    <citation type="journal article" date="1998" name="Biochim. Biophys. Acta">
        <title>A thermophilic nitrate reductase is responsible for the strain specific anaerobic growth of Thermus thermophilus HB8.</title>
        <authorList>
            <person name="Ramirez-Arcos S."/>
            <person name="Fernandez-Herrero L.A."/>
            <person name="Berenguer J."/>
        </authorList>
    </citation>
    <scope>NUCLEOTIDE SEQUENCE [GENOMIC DNA]</scope>
    <source>
        <strain>NAR1</strain>
    </source>
</reference>
<reference key="2">
    <citation type="journal article" date="2000" name="J. Bacteriol.">
        <title>Two nitrate/nitrite transporters are encoded within the mobilizable plasmid for nitrate respiration of Thermus thermophilus HB8.</title>
        <authorList>
            <person name="Ramirez-Arcos S."/>
            <person name="Moreno R."/>
            <person name="Zafra O."/>
            <person name="Castan P."/>
            <person name="Valles C."/>
            <person name="Berenguer J."/>
        </authorList>
    </citation>
    <scope>FUNCTION</scope>
    <scope>DISRUPTION PHENOTYPE</scope>
    <source>
        <strain>NAR1</strain>
    </source>
</reference>
<protein>
    <recommendedName>
        <fullName evidence="4">Probable nitrate/nitrite antiporter NarK1</fullName>
    </recommendedName>
</protein>
<accession>Q9RA46</accession>
<name>NARK1_THETH</name>
<evidence type="ECO:0000255" key="1"/>
<evidence type="ECO:0000269" key="2">
    <source>
    </source>
</evidence>
<evidence type="ECO:0000303" key="3">
    <source>
    </source>
</evidence>
<evidence type="ECO:0000305" key="4"/>
<evidence type="ECO:0000305" key="5">
    <source>
    </source>
</evidence>
<evidence type="ECO:0000312" key="6">
    <source>
        <dbReference type="EMBL" id="CAB65479.2"/>
    </source>
</evidence>
<organism>
    <name type="scientific">Thermus thermophilus</name>
    <dbReference type="NCBI Taxonomy" id="274"/>
    <lineage>
        <taxon>Bacteria</taxon>
        <taxon>Thermotogati</taxon>
        <taxon>Deinococcota</taxon>
        <taxon>Deinococci</taxon>
        <taxon>Thermales</taxon>
        <taxon>Thermaceae</taxon>
        <taxon>Thermus</taxon>
    </lineage>
</organism>